<sequence>MIISSASDYREAARRRVPPFMFHYADGGSYAEQTLARNVSDLENIALRQRVLKDMSELDTSIELFGEKLSMPTILAPVGACGMYARRGEVQAAQAADNKGVPFTLSTVSICPIEEVAPAIKRPMWFQLYVLKDRGFMKNALERAKAAGCSTLVFTVDMPTPGARYRDMHSGMSGPYKEIRRVLQGFTHPFWAYDVGIKGKPHTLGNVSTYMGRQIGLDDYIGWLTENFDPSISWKDLEWIREFWEGPMVIKGILDPEDAKDAVRFGADGIVVSNHGGRQLDGVLSSARALPPIADAVKGDIKIIADSGIRNGLDIVRMLALGADATMLGRAFVYALGAAGRQGVENMLDIFKKEMRVAMTLTSNRTIVDIKPEALVDLSKL</sequence>
<evidence type="ECO:0000255" key="1">
    <source>
        <dbReference type="HAMAP-Rule" id="MF_01559"/>
    </source>
</evidence>
<keyword id="KW-0997">Cell inner membrane</keyword>
<keyword id="KW-1003">Cell membrane</keyword>
<keyword id="KW-0285">Flavoprotein</keyword>
<keyword id="KW-0288">FMN</keyword>
<keyword id="KW-0472">Membrane</keyword>
<keyword id="KW-0560">Oxidoreductase</keyword>
<name>LLDD_HAEI8</name>
<feature type="chain" id="PRO_0000206340" description="L-lactate dehydrogenase">
    <location>
        <begin position="1"/>
        <end position="381"/>
    </location>
</feature>
<feature type="domain" description="FMN hydroxy acid dehydrogenase" evidence="1">
    <location>
        <begin position="1"/>
        <end position="380"/>
    </location>
</feature>
<feature type="active site" description="Proton acceptor" evidence="1">
    <location>
        <position position="275"/>
    </location>
</feature>
<feature type="binding site" evidence="1">
    <location>
        <position position="24"/>
    </location>
    <ligand>
        <name>substrate</name>
    </ligand>
</feature>
<feature type="binding site" evidence="1">
    <location>
        <position position="106"/>
    </location>
    <ligand>
        <name>FMN</name>
        <dbReference type="ChEBI" id="CHEBI:58210"/>
    </ligand>
</feature>
<feature type="binding site" evidence="1">
    <location>
        <position position="127"/>
    </location>
    <ligand>
        <name>FMN</name>
        <dbReference type="ChEBI" id="CHEBI:58210"/>
    </ligand>
</feature>
<feature type="binding site" evidence="1">
    <location>
        <position position="129"/>
    </location>
    <ligand>
        <name>substrate</name>
    </ligand>
</feature>
<feature type="binding site" evidence="1">
    <location>
        <position position="155"/>
    </location>
    <ligand>
        <name>FMN</name>
        <dbReference type="ChEBI" id="CHEBI:58210"/>
    </ligand>
</feature>
<feature type="binding site" evidence="1">
    <location>
        <position position="164"/>
    </location>
    <ligand>
        <name>substrate</name>
    </ligand>
</feature>
<feature type="binding site" evidence="1">
    <location>
        <position position="251"/>
    </location>
    <ligand>
        <name>FMN</name>
        <dbReference type="ChEBI" id="CHEBI:58210"/>
    </ligand>
</feature>
<feature type="binding site" evidence="1">
    <location>
        <position position="278"/>
    </location>
    <ligand>
        <name>substrate</name>
    </ligand>
</feature>
<feature type="binding site" evidence="1">
    <location>
        <begin position="306"/>
        <end position="330"/>
    </location>
    <ligand>
        <name>FMN</name>
        <dbReference type="ChEBI" id="CHEBI:58210"/>
    </ligand>
</feature>
<reference key="1">
    <citation type="journal article" date="2005" name="J. Bacteriol.">
        <title>Genomic sequence of an otitis media isolate of nontypeable Haemophilus influenzae: comparative study with H. influenzae serotype d, strain KW20.</title>
        <authorList>
            <person name="Harrison A."/>
            <person name="Dyer D.W."/>
            <person name="Gillaspy A."/>
            <person name="Ray W.C."/>
            <person name="Mungur R."/>
            <person name="Carson M.B."/>
            <person name="Zhong H."/>
            <person name="Gipson J."/>
            <person name="Gipson M."/>
            <person name="Johnson L.S."/>
            <person name="Lewis L."/>
            <person name="Bakaletz L.O."/>
            <person name="Munson R.S. Jr."/>
        </authorList>
    </citation>
    <scope>NUCLEOTIDE SEQUENCE [LARGE SCALE GENOMIC DNA]</scope>
    <source>
        <strain>86-028NP</strain>
    </source>
</reference>
<gene>
    <name evidence="1" type="primary">lldD</name>
    <name type="ordered locus">NTHI2049</name>
</gene>
<protein>
    <recommendedName>
        <fullName evidence="1">L-lactate dehydrogenase</fullName>
        <ecNumber evidence="1">1.1.-.-</ecNumber>
    </recommendedName>
</protein>
<dbReference type="EC" id="1.1.-.-" evidence="1"/>
<dbReference type="EMBL" id="CP000057">
    <property type="protein sequence ID" value="AAX88789.1"/>
    <property type="molecule type" value="Genomic_DNA"/>
</dbReference>
<dbReference type="RefSeq" id="WP_011272772.1">
    <property type="nucleotide sequence ID" value="NC_007146.2"/>
</dbReference>
<dbReference type="SMR" id="Q4QJK8"/>
<dbReference type="GeneID" id="93220751"/>
<dbReference type="KEGG" id="hit:NTHI2049"/>
<dbReference type="HOGENOM" id="CLU_020639_0_0_6"/>
<dbReference type="Proteomes" id="UP000002525">
    <property type="component" value="Chromosome"/>
</dbReference>
<dbReference type="GO" id="GO:0005886">
    <property type="term" value="C:plasma membrane"/>
    <property type="evidence" value="ECO:0007669"/>
    <property type="project" value="UniProtKB-SubCell"/>
</dbReference>
<dbReference type="GO" id="GO:0010181">
    <property type="term" value="F:FMN binding"/>
    <property type="evidence" value="ECO:0007669"/>
    <property type="project" value="InterPro"/>
</dbReference>
<dbReference type="GO" id="GO:0004459">
    <property type="term" value="F:L-lactate dehydrogenase activity"/>
    <property type="evidence" value="ECO:0007669"/>
    <property type="project" value="UniProtKB-UniRule"/>
</dbReference>
<dbReference type="GO" id="GO:0009060">
    <property type="term" value="P:aerobic respiration"/>
    <property type="evidence" value="ECO:0007669"/>
    <property type="project" value="TreeGrafter"/>
</dbReference>
<dbReference type="GO" id="GO:0006089">
    <property type="term" value="P:lactate metabolic process"/>
    <property type="evidence" value="ECO:0007669"/>
    <property type="project" value="UniProtKB-UniRule"/>
</dbReference>
<dbReference type="CDD" id="cd02809">
    <property type="entry name" value="alpha_hydroxyacid_oxid_FMN"/>
    <property type="match status" value="1"/>
</dbReference>
<dbReference type="FunFam" id="3.20.20.70:FF:000029">
    <property type="entry name" value="L-lactate dehydrogenase"/>
    <property type="match status" value="1"/>
</dbReference>
<dbReference type="Gene3D" id="3.20.20.70">
    <property type="entry name" value="Aldolase class I"/>
    <property type="match status" value="1"/>
</dbReference>
<dbReference type="HAMAP" id="MF_01559">
    <property type="entry name" value="L_lact_dehydr"/>
    <property type="match status" value="1"/>
</dbReference>
<dbReference type="InterPro" id="IPR013785">
    <property type="entry name" value="Aldolase_TIM"/>
</dbReference>
<dbReference type="InterPro" id="IPR012133">
    <property type="entry name" value="Alpha-hydoxy_acid_DH_FMN"/>
</dbReference>
<dbReference type="InterPro" id="IPR000262">
    <property type="entry name" value="FMN-dep_DH"/>
</dbReference>
<dbReference type="InterPro" id="IPR037396">
    <property type="entry name" value="FMN_HAD"/>
</dbReference>
<dbReference type="InterPro" id="IPR008259">
    <property type="entry name" value="FMN_hydac_DH_AS"/>
</dbReference>
<dbReference type="InterPro" id="IPR020920">
    <property type="entry name" value="LldD"/>
</dbReference>
<dbReference type="NCBIfam" id="NF033901">
    <property type="entry name" value="L_lactate_LldD"/>
    <property type="match status" value="1"/>
</dbReference>
<dbReference type="NCBIfam" id="NF008398">
    <property type="entry name" value="PRK11197.1"/>
    <property type="match status" value="1"/>
</dbReference>
<dbReference type="PANTHER" id="PTHR10578:SF85">
    <property type="entry name" value="L-LACTATE DEHYDROGENASE"/>
    <property type="match status" value="1"/>
</dbReference>
<dbReference type="PANTHER" id="PTHR10578">
    <property type="entry name" value="S -2-HYDROXY-ACID OXIDASE-RELATED"/>
    <property type="match status" value="1"/>
</dbReference>
<dbReference type="Pfam" id="PF01070">
    <property type="entry name" value="FMN_dh"/>
    <property type="match status" value="1"/>
</dbReference>
<dbReference type="PIRSF" id="PIRSF000138">
    <property type="entry name" value="Al-hdrx_acd_dh"/>
    <property type="match status" value="1"/>
</dbReference>
<dbReference type="SUPFAM" id="SSF51395">
    <property type="entry name" value="FMN-linked oxidoreductases"/>
    <property type="match status" value="1"/>
</dbReference>
<dbReference type="PROSITE" id="PS00557">
    <property type="entry name" value="FMN_HYDROXY_ACID_DH_1"/>
    <property type="match status" value="1"/>
</dbReference>
<dbReference type="PROSITE" id="PS51349">
    <property type="entry name" value="FMN_HYDROXY_ACID_DH_2"/>
    <property type="match status" value="1"/>
</dbReference>
<comment type="function">
    <text evidence="1">Catalyzes the conversion of L-lactate to pyruvate. Is coupled to the respiratory chain.</text>
</comment>
<comment type="catalytic activity">
    <reaction evidence="1">
        <text>(S)-lactate + A = pyruvate + AH2</text>
        <dbReference type="Rhea" id="RHEA:45816"/>
        <dbReference type="ChEBI" id="CHEBI:13193"/>
        <dbReference type="ChEBI" id="CHEBI:15361"/>
        <dbReference type="ChEBI" id="CHEBI:16651"/>
        <dbReference type="ChEBI" id="CHEBI:17499"/>
    </reaction>
</comment>
<comment type="cofactor">
    <cofactor evidence="1">
        <name>FMN</name>
        <dbReference type="ChEBI" id="CHEBI:58210"/>
    </cofactor>
</comment>
<comment type="subcellular location">
    <subcellularLocation>
        <location evidence="1">Cell inner membrane</location>
        <topology evidence="1">Peripheral membrane protein</topology>
    </subcellularLocation>
</comment>
<comment type="similarity">
    <text evidence="1">Belongs to the FMN-dependent alpha-hydroxy acid dehydrogenase family.</text>
</comment>
<accession>Q4QJK8</accession>
<proteinExistence type="inferred from homology"/>
<organism>
    <name type="scientific">Haemophilus influenzae (strain 86-028NP)</name>
    <dbReference type="NCBI Taxonomy" id="281310"/>
    <lineage>
        <taxon>Bacteria</taxon>
        <taxon>Pseudomonadati</taxon>
        <taxon>Pseudomonadota</taxon>
        <taxon>Gammaproteobacteria</taxon>
        <taxon>Pasteurellales</taxon>
        <taxon>Pasteurellaceae</taxon>
        <taxon>Haemophilus</taxon>
    </lineage>
</organism>